<keyword id="KW-0067">ATP-binding</keyword>
<keyword id="KW-0963">Cytoplasm</keyword>
<keyword id="KW-0418">Kinase</keyword>
<keyword id="KW-0520">NAD</keyword>
<keyword id="KW-0521">NADP</keyword>
<keyword id="KW-0547">Nucleotide-binding</keyword>
<keyword id="KW-1185">Reference proteome</keyword>
<keyword id="KW-0808">Transferase</keyword>
<feature type="chain" id="PRO_0000229627" description="NAD kinase">
    <location>
        <begin position="1"/>
        <end position="318"/>
    </location>
</feature>
<feature type="active site" description="Proton acceptor" evidence="1">
    <location>
        <position position="80"/>
    </location>
</feature>
<feature type="binding site" evidence="1">
    <location>
        <begin position="80"/>
        <end position="81"/>
    </location>
    <ligand>
        <name>NAD(+)</name>
        <dbReference type="ChEBI" id="CHEBI:57540"/>
    </ligand>
</feature>
<feature type="binding site" evidence="1">
    <location>
        <position position="85"/>
    </location>
    <ligand>
        <name>NAD(+)</name>
        <dbReference type="ChEBI" id="CHEBI:57540"/>
    </ligand>
</feature>
<feature type="binding site" evidence="1">
    <location>
        <begin position="155"/>
        <end position="156"/>
    </location>
    <ligand>
        <name>NAD(+)</name>
        <dbReference type="ChEBI" id="CHEBI:57540"/>
    </ligand>
</feature>
<feature type="binding site" evidence="1">
    <location>
        <position position="185"/>
    </location>
    <ligand>
        <name>NAD(+)</name>
        <dbReference type="ChEBI" id="CHEBI:57540"/>
    </ligand>
</feature>
<feature type="binding site" evidence="1">
    <location>
        <begin position="196"/>
        <end position="201"/>
    </location>
    <ligand>
        <name>NAD(+)</name>
        <dbReference type="ChEBI" id="CHEBI:57540"/>
    </ligand>
</feature>
<proteinExistence type="inferred from homology"/>
<accession>Q8FTL6</accession>
<name>NADK_COREF</name>
<comment type="function">
    <text evidence="1">Involved in the regulation of the intracellular balance of NAD and NADP, and is a key enzyme in the biosynthesis of NADP. Catalyzes specifically the phosphorylation on 2'-hydroxyl of the adenosine moiety of NAD to yield NADP.</text>
</comment>
<comment type="catalytic activity">
    <reaction evidence="1">
        <text>NAD(+) + ATP = ADP + NADP(+) + H(+)</text>
        <dbReference type="Rhea" id="RHEA:18629"/>
        <dbReference type="ChEBI" id="CHEBI:15378"/>
        <dbReference type="ChEBI" id="CHEBI:30616"/>
        <dbReference type="ChEBI" id="CHEBI:57540"/>
        <dbReference type="ChEBI" id="CHEBI:58349"/>
        <dbReference type="ChEBI" id="CHEBI:456216"/>
        <dbReference type="EC" id="2.7.1.23"/>
    </reaction>
</comment>
<comment type="cofactor">
    <cofactor evidence="1">
        <name>a divalent metal cation</name>
        <dbReference type="ChEBI" id="CHEBI:60240"/>
    </cofactor>
</comment>
<comment type="subcellular location">
    <subcellularLocation>
        <location evidence="1">Cytoplasm</location>
    </subcellularLocation>
</comment>
<comment type="similarity">
    <text evidence="1">Belongs to the NAD kinase family.</text>
</comment>
<organism>
    <name type="scientific">Corynebacterium efficiens (strain DSM 44549 / YS-314 / AJ 12310 / JCM 11189 / NBRC 100395)</name>
    <dbReference type="NCBI Taxonomy" id="196164"/>
    <lineage>
        <taxon>Bacteria</taxon>
        <taxon>Bacillati</taxon>
        <taxon>Actinomycetota</taxon>
        <taxon>Actinomycetes</taxon>
        <taxon>Mycobacteriales</taxon>
        <taxon>Corynebacteriaceae</taxon>
        <taxon>Corynebacterium</taxon>
    </lineage>
</organism>
<gene>
    <name evidence="1" type="primary">nadK</name>
    <name type="ordered locus">CE1547</name>
</gene>
<reference key="1">
    <citation type="journal article" date="2003" name="Genome Res.">
        <title>Comparative complete genome sequence analysis of the amino acid replacements responsible for the thermostability of Corynebacterium efficiens.</title>
        <authorList>
            <person name="Nishio Y."/>
            <person name="Nakamura Y."/>
            <person name="Kawarabayasi Y."/>
            <person name="Usuda Y."/>
            <person name="Kimura E."/>
            <person name="Sugimoto S."/>
            <person name="Matsui K."/>
            <person name="Yamagishi A."/>
            <person name="Kikuchi H."/>
            <person name="Ikeo K."/>
            <person name="Gojobori T."/>
        </authorList>
    </citation>
    <scope>NUCLEOTIDE SEQUENCE [LARGE SCALE GENOMIC DNA]</scope>
    <source>
        <strain>DSM 44549 / YS-314 / AJ 12310 / JCM 11189 / NBRC 100395</strain>
    </source>
</reference>
<protein>
    <recommendedName>
        <fullName evidence="1">NAD kinase</fullName>
        <ecNumber evidence="1">2.7.1.23</ecNumber>
    </recommendedName>
    <alternativeName>
        <fullName evidence="1">ATP-dependent NAD kinase</fullName>
    </alternativeName>
</protein>
<evidence type="ECO:0000255" key="1">
    <source>
        <dbReference type="HAMAP-Rule" id="MF_00361"/>
    </source>
</evidence>
<sequence length="318" mass="34627">MTETTERIVLLVPHTGRSSNIESAVLAAEHLDRAGITVRVLVNEEDDPIKTHPVLGRFEHVIHSRTAAEGAELVLVLGGDGTFLRAADLAHAVDLPVLGINLGHVGFLAEWESDSLEDAVKRVIDCDYRVEDRMTLDVIVRDSDLEVIGRGWALNEVSVENLNRRGVLDATLEVDFRPVASFGCDGVLISTPTGSTAYAFSAGGPVLWPELDAILVVPNNAHALFTKPLVVSPRSTVAVESMSGTSPAMAVMDGFRPIPMPPGSRVEIVRGKRPVRWVRLDSLPFTDRLVHKLRLPVVGWRGPDKQKELLDAETPDQP</sequence>
<dbReference type="EC" id="2.7.1.23" evidence="1"/>
<dbReference type="EMBL" id="BA000035">
    <property type="protein sequence ID" value="BAC18357.1"/>
    <property type="molecule type" value="Genomic_DNA"/>
</dbReference>
<dbReference type="RefSeq" id="WP_006767544.1">
    <property type="nucleotide sequence ID" value="NC_004369.1"/>
</dbReference>
<dbReference type="SMR" id="Q8FTL6"/>
<dbReference type="STRING" id="196164.gene:10741965"/>
<dbReference type="KEGG" id="cef:CE1547"/>
<dbReference type="eggNOG" id="COG0061">
    <property type="taxonomic scope" value="Bacteria"/>
</dbReference>
<dbReference type="HOGENOM" id="CLU_008831_0_0_11"/>
<dbReference type="OrthoDB" id="9774737at2"/>
<dbReference type="Proteomes" id="UP000001409">
    <property type="component" value="Chromosome"/>
</dbReference>
<dbReference type="GO" id="GO:0005737">
    <property type="term" value="C:cytoplasm"/>
    <property type="evidence" value="ECO:0007669"/>
    <property type="project" value="UniProtKB-SubCell"/>
</dbReference>
<dbReference type="GO" id="GO:0005524">
    <property type="term" value="F:ATP binding"/>
    <property type="evidence" value="ECO:0007669"/>
    <property type="project" value="UniProtKB-KW"/>
</dbReference>
<dbReference type="GO" id="GO:0046872">
    <property type="term" value="F:metal ion binding"/>
    <property type="evidence" value="ECO:0007669"/>
    <property type="project" value="UniProtKB-UniRule"/>
</dbReference>
<dbReference type="GO" id="GO:0051287">
    <property type="term" value="F:NAD binding"/>
    <property type="evidence" value="ECO:0007669"/>
    <property type="project" value="UniProtKB-ARBA"/>
</dbReference>
<dbReference type="GO" id="GO:0003951">
    <property type="term" value="F:NAD+ kinase activity"/>
    <property type="evidence" value="ECO:0007669"/>
    <property type="project" value="UniProtKB-UniRule"/>
</dbReference>
<dbReference type="GO" id="GO:0019674">
    <property type="term" value="P:NAD metabolic process"/>
    <property type="evidence" value="ECO:0007669"/>
    <property type="project" value="InterPro"/>
</dbReference>
<dbReference type="GO" id="GO:0006741">
    <property type="term" value="P:NADP biosynthetic process"/>
    <property type="evidence" value="ECO:0007669"/>
    <property type="project" value="UniProtKB-UniRule"/>
</dbReference>
<dbReference type="FunFam" id="2.60.200.30:FF:000007">
    <property type="entry name" value="NAD kinase"/>
    <property type="match status" value="1"/>
</dbReference>
<dbReference type="Gene3D" id="3.40.50.10330">
    <property type="entry name" value="Probable inorganic polyphosphate/atp-NAD kinase, domain 1"/>
    <property type="match status" value="1"/>
</dbReference>
<dbReference type="Gene3D" id="2.60.200.30">
    <property type="entry name" value="Probable inorganic polyphosphate/atp-NAD kinase, domain 2"/>
    <property type="match status" value="1"/>
</dbReference>
<dbReference type="HAMAP" id="MF_00361">
    <property type="entry name" value="NAD_kinase"/>
    <property type="match status" value="1"/>
</dbReference>
<dbReference type="InterPro" id="IPR017438">
    <property type="entry name" value="ATP-NAD_kinase_N"/>
</dbReference>
<dbReference type="InterPro" id="IPR017437">
    <property type="entry name" value="ATP-NAD_kinase_PpnK-typ_C"/>
</dbReference>
<dbReference type="InterPro" id="IPR016064">
    <property type="entry name" value="NAD/diacylglycerol_kinase_sf"/>
</dbReference>
<dbReference type="InterPro" id="IPR002504">
    <property type="entry name" value="NADK"/>
</dbReference>
<dbReference type="NCBIfam" id="NF002892">
    <property type="entry name" value="PRK03372.1"/>
    <property type="match status" value="1"/>
</dbReference>
<dbReference type="PANTHER" id="PTHR20275">
    <property type="entry name" value="NAD KINASE"/>
    <property type="match status" value="1"/>
</dbReference>
<dbReference type="PANTHER" id="PTHR20275:SF0">
    <property type="entry name" value="NAD KINASE"/>
    <property type="match status" value="1"/>
</dbReference>
<dbReference type="Pfam" id="PF01513">
    <property type="entry name" value="NAD_kinase"/>
    <property type="match status" value="1"/>
</dbReference>
<dbReference type="Pfam" id="PF20143">
    <property type="entry name" value="NAD_kinase_C"/>
    <property type="match status" value="1"/>
</dbReference>
<dbReference type="SUPFAM" id="SSF111331">
    <property type="entry name" value="NAD kinase/diacylglycerol kinase-like"/>
    <property type="match status" value="1"/>
</dbReference>